<name>MNTP_CLOP1</name>
<protein>
    <recommendedName>
        <fullName evidence="1">Putative manganese efflux pump MntP</fullName>
    </recommendedName>
</protein>
<comment type="function">
    <text evidence="1">Probably functions as a manganese efflux pump.</text>
</comment>
<comment type="subcellular location">
    <subcellularLocation>
        <location evidence="1">Cell membrane</location>
        <topology evidence="1">Multi-pass membrane protein</topology>
    </subcellularLocation>
</comment>
<comment type="similarity">
    <text evidence="1">Belongs to the MntP (TC 9.B.29) family.</text>
</comment>
<dbReference type="EMBL" id="CP000246">
    <property type="protein sequence ID" value="ABG84757.1"/>
    <property type="molecule type" value="Genomic_DNA"/>
</dbReference>
<dbReference type="RefSeq" id="WP_011590238.1">
    <property type="nucleotide sequence ID" value="NC_008261.1"/>
</dbReference>
<dbReference type="PaxDb" id="195103-CPF_0516"/>
<dbReference type="GeneID" id="93003140"/>
<dbReference type="KEGG" id="cpf:CPF_0516"/>
<dbReference type="eggNOG" id="COG1971">
    <property type="taxonomic scope" value="Bacteria"/>
</dbReference>
<dbReference type="HOGENOM" id="CLU_096410_3_0_9"/>
<dbReference type="Proteomes" id="UP000001823">
    <property type="component" value="Chromosome"/>
</dbReference>
<dbReference type="GO" id="GO:0005886">
    <property type="term" value="C:plasma membrane"/>
    <property type="evidence" value="ECO:0007669"/>
    <property type="project" value="UniProtKB-SubCell"/>
</dbReference>
<dbReference type="GO" id="GO:0005384">
    <property type="term" value="F:manganese ion transmembrane transporter activity"/>
    <property type="evidence" value="ECO:0007669"/>
    <property type="project" value="UniProtKB-UniRule"/>
</dbReference>
<dbReference type="HAMAP" id="MF_01521">
    <property type="entry name" value="MntP_pump"/>
    <property type="match status" value="1"/>
</dbReference>
<dbReference type="InterPro" id="IPR003810">
    <property type="entry name" value="Mntp/YtaF"/>
</dbReference>
<dbReference type="InterPro" id="IPR022929">
    <property type="entry name" value="Put_MntP"/>
</dbReference>
<dbReference type="PANTHER" id="PTHR35529">
    <property type="entry name" value="MANGANESE EFFLUX PUMP MNTP-RELATED"/>
    <property type="match status" value="1"/>
</dbReference>
<dbReference type="PANTHER" id="PTHR35529:SF1">
    <property type="entry name" value="MANGANESE EFFLUX PUMP MNTP-RELATED"/>
    <property type="match status" value="1"/>
</dbReference>
<dbReference type="Pfam" id="PF02659">
    <property type="entry name" value="Mntp"/>
    <property type="match status" value="1"/>
</dbReference>
<keyword id="KW-1003">Cell membrane</keyword>
<keyword id="KW-0406">Ion transport</keyword>
<keyword id="KW-0464">Manganese</keyword>
<keyword id="KW-0472">Membrane</keyword>
<keyword id="KW-0812">Transmembrane</keyword>
<keyword id="KW-1133">Transmembrane helix</keyword>
<keyword id="KW-0813">Transport</keyword>
<sequence>MSILSIVLTGFGLAMDAFAVSVAKGITLTRVKAKDALKVALFFGGFQALMPLIGWGAGRYFADYIKAFDHWIAFILLGFIGGKMIFEALKEDDEEKAEVAVSMEVSKNKEREFANMKRKEELSAKNLTVLAIATSIDALAVGVSFAFLGISIVQTIIIIGIITFVLCFLGVIIGEKLGDIFKNYAEIVGGVILILIGINILLEHTGIIEKLFS</sequence>
<evidence type="ECO:0000255" key="1">
    <source>
        <dbReference type="HAMAP-Rule" id="MF_01521"/>
    </source>
</evidence>
<accession>Q0TTS0</accession>
<proteinExistence type="inferred from homology"/>
<organism>
    <name type="scientific">Clostridium perfringens (strain ATCC 13124 / DSM 756 / JCM 1290 / NCIMB 6125 / NCTC 8237 / Type A)</name>
    <dbReference type="NCBI Taxonomy" id="195103"/>
    <lineage>
        <taxon>Bacteria</taxon>
        <taxon>Bacillati</taxon>
        <taxon>Bacillota</taxon>
        <taxon>Clostridia</taxon>
        <taxon>Eubacteriales</taxon>
        <taxon>Clostridiaceae</taxon>
        <taxon>Clostridium</taxon>
    </lineage>
</organism>
<gene>
    <name evidence="1" type="primary">mntP</name>
    <name type="ordered locus">CPF_0516</name>
</gene>
<feature type="chain" id="PRO_0000296920" description="Putative manganese efflux pump MntP">
    <location>
        <begin position="1"/>
        <end position="213"/>
    </location>
</feature>
<feature type="transmembrane region" description="Helical" evidence="1">
    <location>
        <begin position="3"/>
        <end position="23"/>
    </location>
</feature>
<feature type="transmembrane region" description="Helical" evidence="1">
    <location>
        <begin position="36"/>
        <end position="56"/>
    </location>
</feature>
<feature type="transmembrane region" description="Helical" evidence="1">
    <location>
        <begin position="67"/>
        <end position="87"/>
    </location>
</feature>
<feature type="transmembrane region" description="Helical" evidence="1">
    <location>
        <begin position="130"/>
        <end position="150"/>
    </location>
</feature>
<feature type="transmembrane region" description="Helical" evidence="1">
    <location>
        <begin position="152"/>
        <end position="172"/>
    </location>
</feature>
<feature type="transmembrane region" description="Helical" evidence="1">
    <location>
        <begin position="187"/>
        <end position="207"/>
    </location>
</feature>
<reference key="1">
    <citation type="journal article" date="2006" name="Genome Res.">
        <title>Skewed genomic variability in strains of the toxigenic bacterial pathogen, Clostridium perfringens.</title>
        <authorList>
            <person name="Myers G.S.A."/>
            <person name="Rasko D.A."/>
            <person name="Cheung J.K."/>
            <person name="Ravel J."/>
            <person name="Seshadri R."/>
            <person name="DeBoy R.T."/>
            <person name="Ren Q."/>
            <person name="Varga J."/>
            <person name="Awad M.M."/>
            <person name="Brinkac L.M."/>
            <person name="Daugherty S.C."/>
            <person name="Haft D.H."/>
            <person name="Dodson R.J."/>
            <person name="Madupu R."/>
            <person name="Nelson W.C."/>
            <person name="Rosovitz M.J."/>
            <person name="Sullivan S.A."/>
            <person name="Khouri H."/>
            <person name="Dimitrov G.I."/>
            <person name="Watkins K.L."/>
            <person name="Mulligan S."/>
            <person name="Benton J."/>
            <person name="Radune D."/>
            <person name="Fisher D.J."/>
            <person name="Atkins H.S."/>
            <person name="Hiscox T."/>
            <person name="Jost B.H."/>
            <person name="Billington S.J."/>
            <person name="Songer J.G."/>
            <person name="McClane B.A."/>
            <person name="Titball R.W."/>
            <person name="Rood J.I."/>
            <person name="Melville S.B."/>
            <person name="Paulsen I.T."/>
        </authorList>
    </citation>
    <scope>NUCLEOTIDE SEQUENCE [LARGE SCALE GENOMIC DNA]</scope>
    <source>
        <strain>ATCC 13124 / DSM 756 / JCM 1290 / NCIMB 6125 / NCTC 8237 / S 107 / Type A</strain>
    </source>
</reference>